<gene>
    <name evidence="1" type="primary">prfA</name>
    <name type="ordered locus">Pro_1683</name>
</gene>
<organism>
    <name type="scientific">Prochlorococcus marinus (strain SARG / CCMP1375 / SS120)</name>
    <dbReference type="NCBI Taxonomy" id="167539"/>
    <lineage>
        <taxon>Bacteria</taxon>
        <taxon>Bacillati</taxon>
        <taxon>Cyanobacteriota</taxon>
        <taxon>Cyanophyceae</taxon>
        <taxon>Synechococcales</taxon>
        <taxon>Prochlorococcaceae</taxon>
        <taxon>Prochlorococcus</taxon>
    </lineage>
</organism>
<feature type="chain" id="PRO_0000263314" description="Peptide chain release factor 1">
    <location>
        <begin position="1"/>
        <end position="365"/>
    </location>
</feature>
<feature type="modified residue" description="N5-methylglutamine" evidence="1">
    <location>
        <position position="239"/>
    </location>
</feature>
<dbReference type="EMBL" id="AE017126">
    <property type="protein sequence ID" value="AAQ00727.1"/>
    <property type="molecule type" value="Genomic_DNA"/>
</dbReference>
<dbReference type="RefSeq" id="NP_876074.1">
    <property type="nucleotide sequence ID" value="NC_005042.1"/>
</dbReference>
<dbReference type="RefSeq" id="WP_011125832.1">
    <property type="nucleotide sequence ID" value="NC_005042.1"/>
</dbReference>
<dbReference type="SMR" id="Q7V9Z0"/>
<dbReference type="STRING" id="167539.Pro_1683"/>
<dbReference type="EnsemblBacteria" id="AAQ00727">
    <property type="protein sequence ID" value="AAQ00727"/>
    <property type="gene ID" value="Pro_1683"/>
</dbReference>
<dbReference type="KEGG" id="pma:Pro_1683"/>
<dbReference type="PATRIC" id="fig|167539.5.peg.1777"/>
<dbReference type="eggNOG" id="COG0216">
    <property type="taxonomic scope" value="Bacteria"/>
</dbReference>
<dbReference type="HOGENOM" id="CLU_036856_0_1_3"/>
<dbReference type="OrthoDB" id="9806673at2"/>
<dbReference type="Proteomes" id="UP000001420">
    <property type="component" value="Chromosome"/>
</dbReference>
<dbReference type="GO" id="GO:0005737">
    <property type="term" value="C:cytoplasm"/>
    <property type="evidence" value="ECO:0007669"/>
    <property type="project" value="UniProtKB-SubCell"/>
</dbReference>
<dbReference type="GO" id="GO:0016149">
    <property type="term" value="F:translation release factor activity, codon specific"/>
    <property type="evidence" value="ECO:0007669"/>
    <property type="project" value="UniProtKB-UniRule"/>
</dbReference>
<dbReference type="FunFam" id="3.30.160.20:FF:000004">
    <property type="entry name" value="Peptide chain release factor 1"/>
    <property type="match status" value="1"/>
</dbReference>
<dbReference type="FunFam" id="3.30.70.1660:FF:000002">
    <property type="entry name" value="Peptide chain release factor 1"/>
    <property type="match status" value="1"/>
</dbReference>
<dbReference type="Gene3D" id="3.30.160.20">
    <property type="match status" value="1"/>
</dbReference>
<dbReference type="Gene3D" id="3.30.70.1660">
    <property type="match status" value="2"/>
</dbReference>
<dbReference type="Gene3D" id="6.10.140.1950">
    <property type="match status" value="1"/>
</dbReference>
<dbReference type="HAMAP" id="MF_00093">
    <property type="entry name" value="Rel_fac_1"/>
    <property type="match status" value="1"/>
</dbReference>
<dbReference type="InterPro" id="IPR005139">
    <property type="entry name" value="PCRF"/>
</dbReference>
<dbReference type="InterPro" id="IPR000352">
    <property type="entry name" value="Pep_chain_release_fac_I"/>
</dbReference>
<dbReference type="InterPro" id="IPR045853">
    <property type="entry name" value="Pep_chain_release_fac_I_sf"/>
</dbReference>
<dbReference type="InterPro" id="IPR050057">
    <property type="entry name" value="Prokaryotic/Mito_RF"/>
</dbReference>
<dbReference type="InterPro" id="IPR004373">
    <property type="entry name" value="RF-1"/>
</dbReference>
<dbReference type="NCBIfam" id="TIGR00019">
    <property type="entry name" value="prfA"/>
    <property type="match status" value="1"/>
</dbReference>
<dbReference type="NCBIfam" id="NF001859">
    <property type="entry name" value="PRK00591.1"/>
    <property type="match status" value="1"/>
</dbReference>
<dbReference type="PANTHER" id="PTHR43804">
    <property type="entry name" value="LD18447P"/>
    <property type="match status" value="1"/>
</dbReference>
<dbReference type="PANTHER" id="PTHR43804:SF8">
    <property type="entry name" value="PEPTIDE CHAIN RELEASE FACTOR APG3, CHLOROPLASTIC"/>
    <property type="match status" value="1"/>
</dbReference>
<dbReference type="Pfam" id="PF03462">
    <property type="entry name" value="PCRF"/>
    <property type="match status" value="1"/>
</dbReference>
<dbReference type="Pfam" id="PF00472">
    <property type="entry name" value="RF-1"/>
    <property type="match status" value="1"/>
</dbReference>
<dbReference type="SMART" id="SM00937">
    <property type="entry name" value="PCRF"/>
    <property type="match status" value="1"/>
</dbReference>
<dbReference type="SUPFAM" id="SSF75620">
    <property type="entry name" value="Release factor"/>
    <property type="match status" value="1"/>
</dbReference>
<dbReference type="PROSITE" id="PS00745">
    <property type="entry name" value="RF_PROK_I"/>
    <property type="match status" value="1"/>
</dbReference>
<protein>
    <recommendedName>
        <fullName evidence="1">Peptide chain release factor 1</fullName>
        <shortName evidence="1">RF-1</shortName>
    </recommendedName>
</protein>
<sequence length="365" mass="40808">MDTSTLKARLETASATFNNLELQLADPDVASDPKKLETIARERARLEPLVLDYKELQAIDLEYKEAKELLRQSKSDKEMEALAQEELIRLEELEKDLVNRLTLALLPKDPRDERSVMLEIRAGAGGDEACIWAGDLARMYERYGLKVGWVVKAMSATEADLGGFRELIISVKGKAVFSQLKFEAGVHRVQRVPATESQGRVHTSTATVAVMPEADPVEVKLEPTDLEISTARSGGAGGQNVNKVETAVDLLHKPTGIRVFCTQERSQLQNRERALEILRAKLLEREIEEANAKERSARLAQVGTGDRSEKIRTYNYKDNRTTDHRLGVNFPLETVLEGELDDLIGACIAEEQRLKMEKLGNQSEE</sequence>
<proteinExistence type="inferred from homology"/>
<evidence type="ECO:0000255" key="1">
    <source>
        <dbReference type="HAMAP-Rule" id="MF_00093"/>
    </source>
</evidence>
<accession>Q7V9Z0</accession>
<comment type="function">
    <text evidence="1">Peptide chain release factor 1 directs the termination of translation in response to the peptide chain termination codons UAG and UAA.</text>
</comment>
<comment type="subcellular location">
    <subcellularLocation>
        <location evidence="1">Cytoplasm</location>
    </subcellularLocation>
</comment>
<comment type="PTM">
    <text evidence="1">Methylated by PrmC. Methylation increases the termination efficiency of RF1.</text>
</comment>
<comment type="similarity">
    <text evidence="1">Belongs to the prokaryotic/mitochondrial release factor family.</text>
</comment>
<reference key="1">
    <citation type="journal article" date="2003" name="Proc. Natl. Acad. Sci. U.S.A.">
        <title>Genome sequence of the cyanobacterium Prochlorococcus marinus SS120, a nearly minimal oxyphototrophic genome.</title>
        <authorList>
            <person name="Dufresne A."/>
            <person name="Salanoubat M."/>
            <person name="Partensky F."/>
            <person name="Artiguenave F."/>
            <person name="Axmann I.M."/>
            <person name="Barbe V."/>
            <person name="Duprat S."/>
            <person name="Galperin M.Y."/>
            <person name="Koonin E.V."/>
            <person name="Le Gall F."/>
            <person name="Makarova K.S."/>
            <person name="Ostrowski M."/>
            <person name="Oztas S."/>
            <person name="Robert C."/>
            <person name="Rogozin I.B."/>
            <person name="Scanlan D.J."/>
            <person name="Tandeau de Marsac N."/>
            <person name="Weissenbach J."/>
            <person name="Wincker P."/>
            <person name="Wolf Y.I."/>
            <person name="Hess W.R."/>
        </authorList>
    </citation>
    <scope>NUCLEOTIDE SEQUENCE [LARGE SCALE GENOMIC DNA]</scope>
    <source>
        <strain>SARG / CCMP1375 / SS120</strain>
    </source>
</reference>
<name>RF1_PROMA</name>
<keyword id="KW-0963">Cytoplasm</keyword>
<keyword id="KW-0488">Methylation</keyword>
<keyword id="KW-0648">Protein biosynthesis</keyword>
<keyword id="KW-1185">Reference proteome</keyword>